<keyword id="KW-0240">DNA-directed RNA polymerase</keyword>
<keyword id="KW-0548">Nucleotidyltransferase</keyword>
<keyword id="KW-0804">Transcription</keyword>
<keyword id="KW-0808">Transferase</keyword>
<name>RPOE_LACJO</name>
<evidence type="ECO:0000255" key="1">
    <source>
        <dbReference type="HAMAP-Rule" id="MF_00357"/>
    </source>
</evidence>
<evidence type="ECO:0000255" key="2">
    <source>
        <dbReference type="PROSITE-ProRule" id="PRU01261"/>
    </source>
</evidence>
<evidence type="ECO:0000256" key="3">
    <source>
        <dbReference type="SAM" id="MobiDB-lite"/>
    </source>
</evidence>
<protein>
    <recommendedName>
        <fullName evidence="1">Probable DNA-directed RNA polymerase subunit delta</fullName>
    </recommendedName>
    <alternativeName>
        <fullName evidence="1">RNAP delta factor</fullName>
    </alternativeName>
</protein>
<sequence length="180" mass="20729">MGLDDFQGQNKDELSMIEVARAILQDSGKRMAFADIVNAVQNFLGKSDEEIRERLPQFYTDMNTDGEFISMGHNVWALRSWFPYESVDEEVNHPEDEEDVPRKKHHKKVNAFIGDSDDDDIIDYDSDDPEDEDLDVDEEDTNEDDYSDDDLDDADDNELDDGIEGQLSELHQDDLDDDDE</sequence>
<proteinExistence type="inferred from homology"/>
<organism>
    <name type="scientific">Lactobacillus johnsonii (strain CNCM I-12250 / La1 / NCC 533)</name>
    <dbReference type="NCBI Taxonomy" id="257314"/>
    <lineage>
        <taxon>Bacteria</taxon>
        <taxon>Bacillati</taxon>
        <taxon>Bacillota</taxon>
        <taxon>Bacilli</taxon>
        <taxon>Lactobacillales</taxon>
        <taxon>Lactobacillaceae</taxon>
        <taxon>Lactobacillus</taxon>
    </lineage>
</organism>
<gene>
    <name evidence="1" type="primary">rpoE</name>
    <name type="ordered locus">LJ_0223</name>
</gene>
<reference key="1">
    <citation type="journal article" date="2004" name="Proc. Natl. Acad. Sci. U.S.A.">
        <title>The genome sequence of the probiotic intestinal bacterium Lactobacillus johnsonii NCC 533.</title>
        <authorList>
            <person name="Pridmore R.D."/>
            <person name="Berger B."/>
            <person name="Desiere F."/>
            <person name="Vilanova D."/>
            <person name="Barretto C."/>
            <person name="Pittet A.-C."/>
            <person name="Zwahlen M.-C."/>
            <person name="Rouvet M."/>
            <person name="Altermann E."/>
            <person name="Barrangou R."/>
            <person name="Mollet B."/>
            <person name="Mercenier A."/>
            <person name="Klaenhammer T."/>
            <person name="Arigoni F."/>
            <person name="Schell M.A."/>
        </authorList>
    </citation>
    <scope>NUCLEOTIDE SEQUENCE [LARGE SCALE GENOMIC DNA]</scope>
    <source>
        <strain>CNCM I-1225 / La1 / NCC 533</strain>
    </source>
</reference>
<feature type="chain" id="PRO_0000303128" description="Probable DNA-directed RNA polymerase subunit delta">
    <location>
        <begin position="1"/>
        <end position="180"/>
    </location>
</feature>
<feature type="domain" description="HTH HARE-type" evidence="2">
    <location>
        <begin position="14"/>
        <end position="81"/>
    </location>
</feature>
<feature type="region of interest" description="Disordered" evidence="3">
    <location>
        <begin position="89"/>
        <end position="180"/>
    </location>
</feature>
<feature type="compositionally biased region" description="Acidic residues" evidence="3">
    <location>
        <begin position="115"/>
        <end position="163"/>
    </location>
</feature>
<comment type="function">
    <text evidence="1">Participates in both the initiation and recycling phases of transcription. In the presence of the delta subunit, RNAP displays an increased specificity of transcription, a decreased affinity for nucleic acids, and an increased efficiency of RNA synthesis because of enhanced recycling.</text>
</comment>
<comment type="subunit">
    <text evidence="1">RNAP is composed of a core of 2 alpha, a beta and a beta' subunits. The core is associated with a delta subunit and one of several sigma factors.</text>
</comment>
<comment type="similarity">
    <text evidence="1">Belongs to the RpoE family.</text>
</comment>
<accession>Q74LG3</accession>
<dbReference type="EMBL" id="AE017198">
    <property type="protein sequence ID" value="AAS08204.1"/>
    <property type="molecule type" value="Genomic_DNA"/>
</dbReference>
<dbReference type="RefSeq" id="WP_011161414.1">
    <property type="nucleotide sequence ID" value="NC_005362.1"/>
</dbReference>
<dbReference type="SMR" id="Q74LG3"/>
<dbReference type="KEGG" id="ljo:LJ_0223"/>
<dbReference type="PATRIC" id="fig|257314.6.peg.234"/>
<dbReference type="eggNOG" id="COG3343">
    <property type="taxonomic scope" value="Bacteria"/>
</dbReference>
<dbReference type="HOGENOM" id="CLU_116648_0_0_9"/>
<dbReference type="Proteomes" id="UP000000581">
    <property type="component" value="Chromosome"/>
</dbReference>
<dbReference type="GO" id="GO:0000428">
    <property type="term" value="C:DNA-directed RNA polymerase complex"/>
    <property type="evidence" value="ECO:0007669"/>
    <property type="project" value="UniProtKB-KW"/>
</dbReference>
<dbReference type="GO" id="GO:0003899">
    <property type="term" value="F:DNA-directed RNA polymerase activity"/>
    <property type="evidence" value="ECO:0007669"/>
    <property type="project" value="UniProtKB-UniRule"/>
</dbReference>
<dbReference type="GO" id="GO:0006351">
    <property type="term" value="P:DNA-templated transcription"/>
    <property type="evidence" value="ECO:0007669"/>
    <property type="project" value="InterPro"/>
</dbReference>
<dbReference type="GO" id="GO:0006355">
    <property type="term" value="P:regulation of DNA-templated transcription"/>
    <property type="evidence" value="ECO:0007669"/>
    <property type="project" value="UniProtKB-UniRule"/>
</dbReference>
<dbReference type="Gene3D" id="1.10.10.1250">
    <property type="entry name" value="RNA polymerase, subunit delta, N-terminal domain"/>
    <property type="match status" value="1"/>
</dbReference>
<dbReference type="HAMAP" id="MF_00357">
    <property type="entry name" value="RNApol_bact_RpoE"/>
    <property type="match status" value="1"/>
</dbReference>
<dbReference type="InterPro" id="IPR007759">
    <property type="entry name" value="Asxl_HARE-HTH"/>
</dbReference>
<dbReference type="InterPro" id="IPR038087">
    <property type="entry name" value="RNAP_delta_N_dom_sf"/>
</dbReference>
<dbReference type="InterPro" id="IPR029757">
    <property type="entry name" value="RpoE"/>
</dbReference>
<dbReference type="NCBIfam" id="TIGR04567">
    <property type="entry name" value="RNAP_delt_lowGC"/>
    <property type="match status" value="1"/>
</dbReference>
<dbReference type="Pfam" id="PF05066">
    <property type="entry name" value="HARE-HTH"/>
    <property type="match status" value="1"/>
</dbReference>
<dbReference type="PROSITE" id="PS51913">
    <property type="entry name" value="HTH_HARE"/>
    <property type="match status" value="1"/>
</dbReference>